<proteinExistence type="inferred from homology"/>
<keyword id="KW-0028">Amino-acid biosynthesis</keyword>
<keyword id="KW-0055">Arginine biosynthesis</keyword>
<keyword id="KW-0170">Cobalt</keyword>
<keyword id="KW-0963">Cytoplasm</keyword>
<keyword id="KW-0378">Hydrolase</keyword>
<keyword id="KW-0457">Lysine biosynthesis</keyword>
<keyword id="KW-0479">Metal-binding</keyword>
<keyword id="KW-0862">Zinc</keyword>
<sequence length="346" mass="38800">MQQEKELVKQKAKELLLDLLSIYTPSKNETNATKFFEKISNEFNLKLEILPDSNSFILGEGEILLASHVDTVPGYIEPKIENEVIYGRGAVDAKGPLISMIIAAWLLNEKGIKVMVSGLADEESTSIGAKELTLKNFNFKHIIVGEPSNGTDIVVEYRGSIQLDIMCESTPEHSSSAKSNLIVDISKKIIEVYKQPENYDKPSIVPTIIRAGESYNVTPAKLYLHFDVRYAINNKRDDLINEIKDKFQECGLKIVDETQPVKVSINNPVVKSLTRALLKQNIKPRLVRKAGTSDMNILQKITTSIATYGPGNSMLEHTNQEKITLDEIYIGVKTYMLAIEELWQKS</sequence>
<gene>
    <name evidence="1" type="primary">lysK</name>
    <name type="ordered locus">YN1551_0817</name>
</gene>
<reference key="1">
    <citation type="journal article" date="2009" name="Proc. Natl. Acad. Sci. U.S.A.">
        <title>Biogeography of the Sulfolobus islandicus pan-genome.</title>
        <authorList>
            <person name="Reno M.L."/>
            <person name="Held N.L."/>
            <person name="Fields C.J."/>
            <person name="Burke P.V."/>
            <person name="Whitaker R.J."/>
        </authorList>
    </citation>
    <scope>NUCLEOTIDE SEQUENCE [LARGE SCALE GENOMIC DNA]</scope>
    <source>
        <strain>Y.N.15.51 / Yellowstone #2</strain>
    </source>
</reference>
<dbReference type="EC" id="3.5.1.130" evidence="1"/>
<dbReference type="EC" id="3.5.1.132" evidence="1"/>
<dbReference type="EMBL" id="CP001404">
    <property type="protein sequence ID" value="ACP47942.1"/>
    <property type="molecule type" value="Genomic_DNA"/>
</dbReference>
<dbReference type="RefSeq" id="WP_012717232.1">
    <property type="nucleotide sequence ID" value="NC_012623.1"/>
</dbReference>
<dbReference type="SMR" id="C3NF46"/>
<dbReference type="GeneID" id="7811246"/>
<dbReference type="KEGG" id="sin:YN1551_0817"/>
<dbReference type="HOGENOM" id="CLU_021802_2_0_2"/>
<dbReference type="UniPathway" id="UPA00033">
    <property type="reaction ID" value="UER00039"/>
</dbReference>
<dbReference type="UniPathway" id="UPA00068"/>
<dbReference type="Proteomes" id="UP000006818">
    <property type="component" value="Chromosome"/>
</dbReference>
<dbReference type="GO" id="GO:0005737">
    <property type="term" value="C:cytoplasm"/>
    <property type="evidence" value="ECO:0007669"/>
    <property type="project" value="UniProtKB-SubCell"/>
</dbReference>
<dbReference type="GO" id="GO:0050897">
    <property type="term" value="F:cobalt ion binding"/>
    <property type="evidence" value="ECO:0007669"/>
    <property type="project" value="UniProtKB-UniRule"/>
</dbReference>
<dbReference type="GO" id="GO:0016811">
    <property type="term" value="F:hydrolase activity, acting on carbon-nitrogen (but not peptide) bonds, in linear amides"/>
    <property type="evidence" value="ECO:0007669"/>
    <property type="project" value="UniProtKB-UniRule"/>
</dbReference>
<dbReference type="GO" id="GO:0008270">
    <property type="term" value="F:zinc ion binding"/>
    <property type="evidence" value="ECO:0007669"/>
    <property type="project" value="UniProtKB-UniRule"/>
</dbReference>
<dbReference type="GO" id="GO:0042450">
    <property type="term" value="P:arginine biosynthetic process via ornithine"/>
    <property type="evidence" value="ECO:0007669"/>
    <property type="project" value="UniProtKB-UniRule"/>
</dbReference>
<dbReference type="GO" id="GO:0006526">
    <property type="term" value="P:L-arginine biosynthetic process"/>
    <property type="evidence" value="ECO:0007669"/>
    <property type="project" value="UniProtKB-UniPathway"/>
</dbReference>
<dbReference type="GO" id="GO:0019878">
    <property type="term" value="P:lysine biosynthetic process via aminoadipic acid"/>
    <property type="evidence" value="ECO:0007669"/>
    <property type="project" value="UniProtKB-UniRule"/>
</dbReference>
<dbReference type="CDD" id="cd05653">
    <property type="entry name" value="M20_ArgE_LysK"/>
    <property type="match status" value="1"/>
</dbReference>
<dbReference type="Gene3D" id="3.30.70.360">
    <property type="match status" value="1"/>
</dbReference>
<dbReference type="Gene3D" id="3.40.630.10">
    <property type="entry name" value="Zn peptidases"/>
    <property type="match status" value="1"/>
</dbReference>
<dbReference type="HAMAP" id="MF_01120">
    <property type="entry name" value="LysK"/>
    <property type="match status" value="1"/>
</dbReference>
<dbReference type="InterPro" id="IPR001261">
    <property type="entry name" value="ArgE/DapE_CS"/>
</dbReference>
<dbReference type="InterPro" id="IPR036264">
    <property type="entry name" value="Bact_exopeptidase_dim_dom"/>
</dbReference>
<dbReference type="InterPro" id="IPR010175">
    <property type="entry name" value="LysK"/>
</dbReference>
<dbReference type="InterPro" id="IPR002933">
    <property type="entry name" value="Peptidase_M20"/>
</dbReference>
<dbReference type="InterPro" id="IPR011650">
    <property type="entry name" value="Peptidase_M20_dimer"/>
</dbReference>
<dbReference type="InterPro" id="IPR050072">
    <property type="entry name" value="Peptidase_M20A"/>
</dbReference>
<dbReference type="NCBIfam" id="TIGR01902">
    <property type="entry name" value="dapE-lys-deAc"/>
    <property type="match status" value="1"/>
</dbReference>
<dbReference type="NCBIfam" id="NF001747">
    <property type="entry name" value="PRK00466.1"/>
    <property type="match status" value="1"/>
</dbReference>
<dbReference type="PANTHER" id="PTHR43808:SF28">
    <property type="entry name" value="[LYSW]-LYSINE_[LYSW]-ORNITHINE HYDROLASE"/>
    <property type="match status" value="1"/>
</dbReference>
<dbReference type="PANTHER" id="PTHR43808">
    <property type="entry name" value="ACETYLORNITHINE DEACETYLASE"/>
    <property type="match status" value="1"/>
</dbReference>
<dbReference type="Pfam" id="PF07687">
    <property type="entry name" value="M20_dimer"/>
    <property type="match status" value="1"/>
</dbReference>
<dbReference type="Pfam" id="PF01546">
    <property type="entry name" value="Peptidase_M20"/>
    <property type="match status" value="1"/>
</dbReference>
<dbReference type="SUPFAM" id="SSF55031">
    <property type="entry name" value="Bacterial exopeptidase dimerisation domain"/>
    <property type="match status" value="1"/>
</dbReference>
<dbReference type="SUPFAM" id="SSF53187">
    <property type="entry name" value="Zn-dependent exopeptidases"/>
    <property type="match status" value="1"/>
</dbReference>
<dbReference type="PROSITE" id="PS00758">
    <property type="entry name" value="ARGE_DAPE_CPG2_1"/>
    <property type="match status" value="1"/>
</dbReference>
<protein>
    <recommendedName>
        <fullName evidence="1">[LysW]-lysine/[LysW]-ornithine hydrolase</fullName>
        <ecNumber evidence="1">3.5.1.130</ecNumber>
        <ecNumber evidence="1">3.5.1.132</ecNumber>
    </recommendedName>
</protein>
<accession>C3NF46</accession>
<evidence type="ECO:0000255" key="1">
    <source>
        <dbReference type="HAMAP-Rule" id="MF_01120"/>
    </source>
</evidence>
<feature type="chain" id="PRO_1000213617" description="[LysW]-lysine/[LysW]-ornithine hydrolase">
    <location>
        <begin position="1"/>
        <end position="346"/>
    </location>
</feature>
<feature type="active site" evidence="1">
    <location>
        <position position="70"/>
    </location>
</feature>
<feature type="active site" description="Proton acceptor" evidence="1">
    <location>
        <position position="122"/>
    </location>
</feature>
<feature type="binding site" evidence="1">
    <location>
        <position position="68"/>
    </location>
    <ligand>
        <name>Zn(2+)</name>
        <dbReference type="ChEBI" id="CHEBI:29105"/>
        <label>1</label>
    </ligand>
</feature>
<feature type="binding site" evidence="1">
    <location>
        <position position="92"/>
    </location>
    <ligand>
        <name>Zn(2+)</name>
        <dbReference type="ChEBI" id="CHEBI:29105"/>
        <label>1</label>
    </ligand>
</feature>
<feature type="binding site" evidence="1">
    <location>
        <position position="92"/>
    </location>
    <ligand>
        <name>Zn(2+)</name>
        <dbReference type="ChEBI" id="CHEBI:29105"/>
        <label>2</label>
    </ligand>
</feature>
<feature type="binding site" evidence="1">
    <location>
        <position position="123"/>
    </location>
    <ligand>
        <name>Zn(2+)</name>
        <dbReference type="ChEBI" id="CHEBI:29105"/>
        <label>2</label>
    </ligand>
</feature>
<feature type="binding site" evidence="1">
    <location>
        <position position="146"/>
    </location>
    <ligand>
        <name>Zn(2+)</name>
        <dbReference type="ChEBI" id="CHEBI:29105"/>
        <label>1</label>
    </ligand>
</feature>
<feature type="binding site" evidence="1">
    <location>
        <position position="317"/>
    </location>
    <ligand>
        <name>Zn(2+)</name>
        <dbReference type="ChEBI" id="CHEBI:29105"/>
        <label>2</label>
    </ligand>
</feature>
<comment type="function">
    <text evidence="1">Catalyzes the release of L-lysine from [LysW]-gamma-L-lysine and the release of L-ornithine from [LysW]-L-ornithine.</text>
</comment>
<comment type="catalytic activity">
    <reaction evidence="1">
        <text>[amino-group carrier protein]-C-terminal-gamma-(L-lysyl)-L-glutamate + H2O = [amino-group carrier protein]-C-terminal-L-glutamate + L-lysine</text>
        <dbReference type="Rhea" id="RHEA:48684"/>
        <dbReference type="Rhea" id="RHEA-COMP:9693"/>
        <dbReference type="Rhea" id="RHEA-COMP:9715"/>
        <dbReference type="ChEBI" id="CHEBI:15377"/>
        <dbReference type="ChEBI" id="CHEBI:32551"/>
        <dbReference type="ChEBI" id="CHEBI:78525"/>
        <dbReference type="ChEBI" id="CHEBI:78526"/>
        <dbReference type="EC" id="3.5.1.130"/>
    </reaction>
</comment>
<comment type="catalytic activity">
    <reaction evidence="1">
        <text>[amino-group carrier protein]-C-terminal-gamma-(L-ornithyl)-L-glutamate + H2O = [amino-group carrier protein]-C-terminal-L-glutamate + L-ornithine</text>
        <dbReference type="Rhea" id="RHEA:52676"/>
        <dbReference type="Rhea" id="RHEA-COMP:9693"/>
        <dbReference type="Rhea" id="RHEA-COMP:13328"/>
        <dbReference type="ChEBI" id="CHEBI:15377"/>
        <dbReference type="ChEBI" id="CHEBI:46911"/>
        <dbReference type="ChEBI" id="CHEBI:78525"/>
        <dbReference type="ChEBI" id="CHEBI:136763"/>
        <dbReference type="EC" id="3.5.1.132"/>
    </reaction>
</comment>
<comment type="cofactor">
    <cofactor evidence="1">
        <name>Zn(2+)</name>
        <dbReference type="ChEBI" id="CHEBI:29105"/>
    </cofactor>
    <cofactor evidence="1">
        <name>Co(2+)</name>
        <dbReference type="ChEBI" id="CHEBI:48828"/>
    </cofactor>
    <text evidence="1">Binds 2 Zn(2+) or Co(2+) ions per subunit.</text>
</comment>
<comment type="pathway">
    <text evidence="1">Amino-acid biosynthesis; L-lysine biosynthesis via AAA pathway; L-lysine from L-alpha-aminoadipate (Thermus route): step 5/5.</text>
</comment>
<comment type="pathway">
    <text evidence="1">Amino-acid biosynthesis; L-arginine biosynthesis.</text>
</comment>
<comment type="subcellular location">
    <subcellularLocation>
        <location evidence="1">Cytoplasm</location>
    </subcellularLocation>
</comment>
<comment type="similarity">
    <text evidence="1">Belongs to the peptidase M20A family. LysK subfamily.</text>
</comment>
<name>LYSK_SACI1</name>
<organism>
    <name type="scientific">Saccharolobus islandicus (strain Y.N.15.51 / Yellowstone #2)</name>
    <name type="common">Sulfolobus islandicus</name>
    <dbReference type="NCBI Taxonomy" id="419942"/>
    <lineage>
        <taxon>Archaea</taxon>
        <taxon>Thermoproteota</taxon>
        <taxon>Thermoprotei</taxon>
        <taxon>Sulfolobales</taxon>
        <taxon>Sulfolobaceae</taxon>
        <taxon>Saccharolobus</taxon>
    </lineage>
</organism>